<proteinExistence type="inferred from homology"/>
<reference key="1">
    <citation type="submission" date="2006-12" db="EMBL/GenBank/DDBJ databases">
        <title>Complete sequence of Chlorobium phaeobacteroides DSM 266.</title>
        <authorList>
            <consortium name="US DOE Joint Genome Institute"/>
            <person name="Copeland A."/>
            <person name="Lucas S."/>
            <person name="Lapidus A."/>
            <person name="Barry K."/>
            <person name="Detter J.C."/>
            <person name="Glavina del Rio T."/>
            <person name="Hammon N."/>
            <person name="Israni S."/>
            <person name="Pitluck S."/>
            <person name="Goltsman E."/>
            <person name="Schmutz J."/>
            <person name="Larimer F."/>
            <person name="Land M."/>
            <person name="Hauser L."/>
            <person name="Mikhailova N."/>
            <person name="Li T."/>
            <person name="Overmann J."/>
            <person name="Bryant D.A."/>
            <person name="Richardson P."/>
        </authorList>
    </citation>
    <scope>NUCLEOTIDE SEQUENCE [LARGE SCALE GENOMIC DNA]</scope>
    <source>
        <strain>DSM 266 / SMG 266 / 2430</strain>
    </source>
</reference>
<name>HPRK_CHLPD</name>
<organism>
    <name type="scientific">Chlorobium phaeobacteroides (strain DSM 266 / SMG 266 / 2430)</name>
    <dbReference type="NCBI Taxonomy" id="290317"/>
    <lineage>
        <taxon>Bacteria</taxon>
        <taxon>Pseudomonadati</taxon>
        <taxon>Chlorobiota</taxon>
        <taxon>Chlorobiia</taxon>
        <taxon>Chlorobiales</taxon>
        <taxon>Chlorobiaceae</taxon>
        <taxon>Chlorobium/Pelodictyon group</taxon>
        <taxon>Chlorobium</taxon>
    </lineage>
</organism>
<evidence type="ECO:0000255" key="1">
    <source>
        <dbReference type="HAMAP-Rule" id="MF_01249"/>
    </source>
</evidence>
<sequence>MTLEQKGLKKQSITVAYFFDTIGKEHDIKLRRLNSVDEQKRRIFERDLHRPGLALAGFTNLFTYKRVQILGNTEMRFLNQHEEDARKNAFGNFVRFKIPCIILTSTNKLQPELLAMATEAGIPVFSTRHSSTKTMYLITEFLDNQFSLYQQYHGSMVDVYGVGVLLKGRSGLGKSEVALDLVERGHGLVADDVVVIHRKGESMILTAKRNKNIEHFMEIRGLGVVDVKANFGIRAIRDAKEVQVVVELLEWNKEMEYERLGLDTKTTKILGVEVPLVQLPIFPGKNITVIIEVVALNFLLKHYYDYVPAEALTKRIRTAIDQ</sequence>
<comment type="function">
    <text evidence="1">Catalyzes the ATP- as well as the pyrophosphate-dependent phosphorylation of a specific serine residue in HPr, a phosphocarrier protein of the phosphoenolpyruvate-dependent sugar phosphotransferase system (PTS). HprK/P also catalyzes the pyrophosphate-producing, inorganic phosphate-dependent dephosphorylation (phosphorolysis) of seryl-phosphorylated HPr (P-Ser-HPr).</text>
</comment>
<comment type="catalytic activity">
    <reaction evidence="1">
        <text>[HPr protein]-L-serine + ATP = [HPr protein]-O-phospho-L-serine + ADP + H(+)</text>
        <dbReference type="Rhea" id="RHEA:46600"/>
        <dbReference type="Rhea" id="RHEA-COMP:11602"/>
        <dbReference type="Rhea" id="RHEA-COMP:11603"/>
        <dbReference type="ChEBI" id="CHEBI:15378"/>
        <dbReference type="ChEBI" id="CHEBI:29999"/>
        <dbReference type="ChEBI" id="CHEBI:30616"/>
        <dbReference type="ChEBI" id="CHEBI:83421"/>
        <dbReference type="ChEBI" id="CHEBI:456216"/>
    </reaction>
</comment>
<comment type="catalytic activity">
    <reaction evidence="1">
        <text>[HPr protein]-O-phospho-L-serine + phosphate + H(+) = [HPr protein]-L-serine + diphosphate</text>
        <dbReference type="Rhea" id="RHEA:46604"/>
        <dbReference type="Rhea" id="RHEA-COMP:11602"/>
        <dbReference type="Rhea" id="RHEA-COMP:11603"/>
        <dbReference type="ChEBI" id="CHEBI:15378"/>
        <dbReference type="ChEBI" id="CHEBI:29999"/>
        <dbReference type="ChEBI" id="CHEBI:33019"/>
        <dbReference type="ChEBI" id="CHEBI:43474"/>
        <dbReference type="ChEBI" id="CHEBI:83421"/>
    </reaction>
</comment>
<comment type="cofactor">
    <cofactor evidence="1">
        <name>Mg(2+)</name>
        <dbReference type="ChEBI" id="CHEBI:18420"/>
    </cofactor>
</comment>
<comment type="subunit">
    <text evidence="1">Homohexamer.</text>
</comment>
<comment type="domain">
    <text evidence="1">The Walker A ATP-binding motif also binds Pi and PPi.</text>
</comment>
<comment type="miscellaneous">
    <text evidence="1">Both phosphorylation and phosphorolysis are carried out by the same active site and suggest a common mechanism for both reactions.</text>
</comment>
<comment type="similarity">
    <text evidence="1">Belongs to the HPrK/P family.</text>
</comment>
<dbReference type="EC" id="2.7.11.-" evidence="1"/>
<dbReference type="EC" id="2.7.4.-" evidence="1"/>
<dbReference type="EMBL" id="CP000492">
    <property type="protein sequence ID" value="ABL64622.1"/>
    <property type="molecule type" value="Genomic_DNA"/>
</dbReference>
<dbReference type="RefSeq" id="WP_011744455.1">
    <property type="nucleotide sequence ID" value="NC_008639.1"/>
</dbReference>
<dbReference type="SMR" id="A1BDZ5"/>
<dbReference type="STRING" id="290317.Cpha266_0566"/>
<dbReference type="KEGG" id="cph:Cpha266_0566"/>
<dbReference type="eggNOG" id="COG1493">
    <property type="taxonomic scope" value="Bacteria"/>
</dbReference>
<dbReference type="HOGENOM" id="CLU_052030_0_1_10"/>
<dbReference type="OrthoDB" id="9778803at2"/>
<dbReference type="Proteomes" id="UP000008701">
    <property type="component" value="Chromosome"/>
</dbReference>
<dbReference type="GO" id="GO:0005524">
    <property type="term" value="F:ATP binding"/>
    <property type="evidence" value="ECO:0007669"/>
    <property type="project" value="UniProtKB-UniRule"/>
</dbReference>
<dbReference type="GO" id="GO:0000287">
    <property type="term" value="F:magnesium ion binding"/>
    <property type="evidence" value="ECO:0007669"/>
    <property type="project" value="UniProtKB-UniRule"/>
</dbReference>
<dbReference type="GO" id="GO:0000155">
    <property type="term" value="F:phosphorelay sensor kinase activity"/>
    <property type="evidence" value="ECO:0007669"/>
    <property type="project" value="InterPro"/>
</dbReference>
<dbReference type="GO" id="GO:0004674">
    <property type="term" value="F:protein serine/threonine kinase activity"/>
    <property type="evidence" value="ECO:0007669"/>
    <property type="project" value="UniProtKB-KW"/>
</dbReference>
<dbReference type="GO" id="GO:0004712">
    <property type="term" value="F:protein serine/threonine/tyrosine kinase activity"/>
    <property type="evidence" value="ECO:0007669"/>
    <property type="project" value="UniProtKB-UniRule"/>
</dbReference>
<dbReference type="GO" id="GO:0006109">
    <property type="term" value="P:regulation of carbohydrate metabolic process"/>
    <property type="evidence" value="ECO:0007669"/>
    <property type="project" value="UniProtKB-UniRule"/>
</dbReference>
<dbReference type="CDD" id="cd01918">
    <property type="entry name" value="HprK_C"/>
    <property type="match status" value="1"/>
</dbReference>
<dbReference type="Gene3D" id="3.40.1390.20">
    <property type="entry name" value="HprK N-terminal domain-like"/>
    <property type="match status" value="1"/>
</dbReference>
<dbReference type="Gene3D" id="3.40.50.300">
    <property type="entry name" value="P-loop containing nucleotide triphosphate hydrolases"/>
    <property type="match status" value="1"/>
</dbReference>
<dbReference type="HAMAP" id="MF_01249">
    <property type="entry name" value="HPr_kinase"/>
    <property type="match status" value="1"/>
</dbReference>
<dbReference type="InterPro" id="IPR003755">
    <property type="entry name" value="HPr(Ser)_kin/Pase"/>
</dbReference>
<dbReference type="InterPro" id="IPR011104">
    <property type="entry name" value="Hpr_kin/Pase_C"/>
</dbReference>
<dbReference type="InterPro" id="IPR011126">
    <property type="entry name" value="Hpr_kin/Pase_Hpr_N"/>
</dbReference>
<dbReference type="InterPro" id="IPR027417">
    <property type="entry name" value="P-loop_NTPase"/>
</dbReference>
<dbReference type="InterPro" id="IPR028979">
    <property type="entry name" value="Ser_kin/Pase_Hpr-like_N_sf"/>
</dbReference>
<dbReference type="NCBIfam" id="TIGR00679">
    <property type="entry name" value="hpr-ser"/>
    <property type="match status" value="1"/>
</dbReference>
<dbReference type="PANTHER" id="PTHR30305:SF1">
    <property type="entry name" value="HPR KINASE_PHOSPHORYLASE"/>
    <property type="match status" value="1"/>
</dbReference>
<dbReference type="PANTHER" id="PTHR30305">
    <property type="entry name" value="PROTEIN YJDM-RELATED"/>
    <property type="match status" value="1"/>
</dbReference>
<dbReference type="Pfam" id="PF07475">
    <property type="entry name" value="Hpr_kinase_C"/>
    <property type="match status" value="1"/>
</dbReference>
<dbReference type="Pfam" id="PF02603">
    <property type="entry name" value="Hpr_kinase_N"/>
    <property type="match status" value="1"/>
</dbReference>
<dbReference type="SUPFAM" id="SSF75138">
    <property type="entry name" value="HprK N-terminal domain-like"/>
    <property type="match status" value="1"/>
</dbReference>
<dbReference type="SUPFAM" id="SSF53795">
    <property type="entry name" value="PEP carboxykinase-like"/>
    <property type="match status" value="1"/>
</dbReference>
<protein>
    <recommendedName>
        <fullName evidence="1">HPr kinase/phosphorylase</fullName>
        <shortName evidence="1">HPrK/P</shortName>
        <ecNumber evidence="1">2.7.11.-</ecNumber>
        <ecNumber evidence="1">2.7.4.-</ecNumber>
    </recommendedName>
    <alternativeName>
        <fullName evidence="1">HPr(Ser) kinase/phosphorylase</fullName>
    </alternativeName>
</protein>
<keyword id="KW-0067">ATP-binding</keyword>
<keyword id="KW-0418">Kinase</keyword>
<keyword id="KW-0460">Magnesium</keyword>
<keyword id="KW-0479">Metal-binding</keyword>
<keyword id="KW-0511">Multifunctional enzyme</keyword>
<keyword id="KW-0547">Nucleotide-binding</keyword>
<keyword id="KW-1185">Reference proteome</keyword>
<keyword id="KW-0723">Serine/threonine-protein kinase</keyword>
<keyword id="KW-0808">Transferase</keyword>
<gene>
    <name evidence="1" type="primary">hprK</name>
    <name type="ordered locus">Cpha266_0566</name>
</gene>
<feature type="chain" id="PRO_1000067144" description="HPr kinase/phosphorylase">
    <location>
        <begin position="1"/>
        <end position="322"/>
    </location>
</feature>
<feature type="region of interest" description="Important for the catalytic mechanism of both phosphorylation and dephosphorylation" evidence="1">
    <location>
        <begin position="217"/>
        <end position="226"/>
    </location>
</feature>
<feature type="region of interest" description="Important for the catalytic mechanism of dephosphorylation" evidence="1">
    <location>
        <begin position="280"/>
        <end position="285"/>
    </location>
</feature>
<feature type="active site" evidence="1">
    <location>
        <position position="153"/>
    </location>
</feature>
<feature type="active site" evidence="1">
    <location>
        <position position="174"/>
    </location>
</feature>
<feature type="active site" description="Proton acceptor; for phosphorylation activity. Proton donor; for dephosphorylation activity" evidence="1">
    <location>
        <position position="192"/>
    </location>
</feature>
<feature type="active site" evidence="1">
    <location>
        <position position="259"/>
    </location>
</feature>
<feature type="binding site" evidence="1">
    <location>
        <begin position="168"/>
        <end position="175"/>
    </location>
    <ligand>
        <name>ATP</name>
        <dbReference type="ChEBI" id="CHEBI:30616"/>
    </ligand>
</feature>
<feature type="binding site" evidence="1">
    <location>
        <position position="175"/>
    </location>
    <ligand>
        <name>Mg(2+)</name>
        <dbReference type="ChEBI" id="CHEBI:18420"/>
    </ligand>
</feature>
<feature type="binding site" evidence="1">
    <location>
        <position position="218"/>
    </location>
    <ligand>
        <name>Mg(2+)</name>
        <dbReference type="ChEBI" id="CHEBI:18420"/>
    </ligand>
</feature>
<accession>A1BDZ5</accession>